<keyword id="KW-0002">3D-structure</keyword>
<keyword id="KW-0122">Cardiomyopathy</keyword>
<keyword id="KW-0143">Chaperone</keyword>
<keyword id="KW-0186">Copper</keyword>
<keyword id="KW-0225">Disease variant</keyword>
<keyword id="KW-1015">Disulfide bond</keyword>
<keyword id="KW-0431">Leigh syndrome</keyword>
<keyword id="KW-0472">Membrane</keyword>
<keyword id="KW-0479">Metal-binding</keyword>
<keyword id="KW-0496">Mitochondrion</keyword>
<keyword id="KW-0999">Mitochondrion inner membrane</keyword>
<keyword id="KW-1274">Primary mitochondrial disease</keyword>
<keyword id="KW-1267">Proteomics identification</keyword>
<keyword id="KW-1185">Reference proteome</keyword>
<keyword id="KW-0809">Transit peptide</keyword>
<keyword id="KW-0812">Transmembrane</keyword>
<keyword id="KW-1133">Transmembrane helix</keyword>
<reference key="1">
    <citation type="journal article" date="1999" name="Nat. Genet.">
        <title>Fatal infantile cardioencephalomyopathy with COX deficiency and mutations in SCO2, a COX assembly gene.</title>
        <authorList>
            <person name="Papadopoulou L.C."/>
            <person name="Sue C.M."/>
            <person name="Davidson M.M."/>
            <person name="Tanji K."/>
            <person name="Nishino I."/>
            <person name="Sadlock J.E."/>
            <person name="Krishna S."/>
            <person name="Walker W."/>
            <person name="Selby J."/>
            <person name="Glerum D.M."/>
            <person name="Van Coster R."/>
            <person name="Lyon G."/>
            <person name="Scalais E."/>
            <person name="Lebel R."/>
            <person name="Kaplan P."/>
            <person name="Shanske S."/>
            <person name="De Vivo D.C."/>
            <person name="Bonilla E."/>
            <person name="Hirano M."/>
            <person name="DiMauro S."/>
            <person name="Schon E.A."/>
        </authorList>
    </citation>
    <scope>NUCLEOTIDE SEQUENCE [GENOMIC DNA]</scope>
    <scope>VARIANTS MC4DN2 LYS-140 AND PHE-225</scope>
</reference>
<reference key="2">
    <citation type="journal article" date="2003" name="Genome Res.">
        <title>Reevaluating human gene annotation: a second-generation analysis of chromosome 22.</title>
        <authorList>
            <person name="Collins J.E."/>
            <person name="Goward M.E."/>
            <person name="Cole C.G."/>
            <person name="Smink L.J."/>
            <person name="Huckle E.J."/>
            <person name="Knowles S."/>
            <person name="Bye J.M."/>
            <person name="Beare D.M."/>
            <person name="Dunham I."/>
        </authorList>
    </citation>
    <scope>NUCLEOTIDE SEQUENCE [LARGE SCALE MRNA]</scope>
    <source>
        <tissue>Monocyte</tissue>
    </source>
</reference>
<reference key="3">
    <citation type="journal article" date="2004" name="Genome Biol.">
        <title>A genome annotation-driven approach to cloning the human ORFeome.</title>
        <authorList>
            <person name="Collins J.E."/>
            <person name="Wright C.L."/>
            <person name="Edwards C.A."/>
            <person name="Davis M.P."/>
            <person name="Grinham J.A."/>
            <person name="Cole C.G."/>
            <person name="Goward M.E."/>
            <person name="Aguado B."/>
            <person name="Mallya M."/>
            <person name="Mokrab Y."/>
            <person name="Huckle E.J."/>
            <person name="Beare D.M."/>
            <person name="Dunham I."/>
        </authorList>
    </citation>
    <scope>NUCLEOTIDE SEQUENCE [LARGE SCALE MRNA]</scope>
    <scope>VARIANT PRO-20</scope>
</reference>
<reference key="4">
    <citation type="journal article" date="2004" name="Genome Res.">
        <title>The status, quality, and expansion of the NIH full-length cDNA project: the Mammalian Gene Collection (MGC).</title>
        <authorList>
            <consortium name="The MGC Project Team"/>
        </authorList>
    </citation>
    <scope>NUCLEOTIDE SEQUENCE [LARGE SCALE MRNA]</scope>
</reference>
<reference key="5">
    <citation type="journal article" date="2004" name="Hum. Mol. Genet.">
        <title>Human SCO1 and SCO2 have independent, cooperative functions in copper delivery to cytochrome c oxidase.</title>
        <authorList>
            <person name="Leary S.C."/>
            <person name="Kaufman B.A."/>
            <person name="Pellecchia G."/>
            <person name="Guercin G.H."/>
            <person name="Mattman A."/>
            <person name="Jaksch M."/>
            <person name="Shoubridge E.A."/>
        </authorList>
    </citation>
    <scope>FUNCTION</scope>
    <scope>SUBCELLULAR LOCATION</scope>
    <scope>TOPOLOGY</scope>
    <scope>SUBUNIT</scope>
</reference>
<reference key="6">
    <citation type="journal article" date="2007" name="Cell Metab.">
        <title>The human cytochrome c oxidase assembly factors SCO1 and SCO2 have regulatory roles in the maintenance of cellular copper homeostasis.</title>
        <authorList>
            <person name="Leary S.C."/>
            <person name="Cobine P.A."/>
            <person name="Kaufman B.A."/>
            <person name="Guercin G.H."/>
            <person name="Mattman A."/>
            <person name="Palaty J."/>
            <person name="Lockitch G."/>
            <person name="Winge D.R."/>
            <person name="Rustin P."/>
            <person name="Horvath R."/>
            <person name="Shoubridge E.A."/>
        </authorList>
    </citation>
    <scope>FUNCTION</scope>
    <scope>CHARACTERIZATION OF VARIANT MC4DN2 LYS-140</scope>
</reference>
<reference key="7">
    <citation type="journal article" date="2009" name="Hum. Mol. Genet.">
        <title>Human SCO2 is required for the synthesis of CO II and as a thiol-disulphide oxidoreductase for SCO1.</title>
        <authorList>
            <person name="Leary S.C."/>
            <person name="Sasarman F."/>
            <person name="Nishimura T."/>
            <person name="Shoubridge E.A."/>
        </authorList>
    </citation>
    <scope>FUNCTION</scope>
    <scope>CHARACTERIZATION OF VARIANT MC4DN2 LYS-140</scope>
</reference>
<reference key="8">
    <citation type="journal article" date="2011" name="BMC Syst. Biol.">
        <title>Initial characterization of the human central proteome.</title>
        <authorList>
            <person name="Burkard T.R."/>
            <person name="Planyavsky M."/>
            <person name="Kaupe I."/>
            <person name="Breitwieser F.P."/>
            <person name="Buerckstuemmer T."/>
            <person name="Bennett K.L."/>
            <person name="Superti-Furga G."/>
            <person name="Colinge J."/>
        </authorList>
    </citation>
    <scope>IDENTIFICATION BY MASS SPECTROMETRY [LARGE SCALE ANALYSIS]</scope>
</reference>
<reference key="9">
    <citation type="journal article" date="2014" name="Hum. Mol. Genet.">
        <title>Human COX20 cooperates with SCO1 and SCO2 to mature COX2 and promote the assembly of cytochrome c oxidase.</title>
        <authorList>
            <person name="Bourens M."/>
            <person name="Boulet A."/>
            <person name="Leary S.C."/>
            <person name="Barrientos A."/>
        </authorList>
    </citation>
    <scope>INTERACTION WITH COX20</scope>
</reference>
<reference key="10">
    <citation type="journal article" date="2015" name="Cell Metab.">
        <title>Cooperation between COA6 and SCO2 in COX2 maturation during cytochrome c oxidase assembly links two mitochondrial cardiomyopathies.</title>
        <authorList>
            <person name="Pacheu-Grau D."/>
            <person name="Bareth B."/>
            <person name="Dudek J."/>
            <person name="Juris L."/>
            <person name="Voegtle F.N."/>
            <person name="Wissel M."/>
            <person name="Leary S.C."/>
            <person name="Dennerlein S."/>
            <person name="Rehling P."/>
            <person name="Deckers M."/>
        </authorList>
    </citation>
    <scope>INTERACTION WITH COA6</scope>
    <scope>CHARACTERIZATION OF VARIANT MYP6 HIS-114</scope>
    <scope>CHARACTERIZATION OF VARIANT MC4DN2 TRP-171</scope>
</reference>
<reference key="11">
    <citation type="journal article" date="2015" name="Proteomics">
        <title>N-terminome analysis of the human mitochondrial proteome.</title>
        <authorList>
            <person name="Vaca Jacome A.S."/>
            <person name="Rabilloud T."/>
            <person name="Schaeffer-Reiss C."/>
            <person name="Rompais M."/>
            <person name="Ayoub D."/>
            <person name="Lane L."/>
            <person name="Bairoch A."/>
            <person name="Van Dorsselaer A."/>
            <person name="Carapito C."/>
        </authorList>
    </citation>
    <scope>IDENTIFICATION BY MASS SPECTROMETRY [LARGE SCALE ANALYSIS]</scope>
</reference>
<reference key="12">
    <citation type="journal article" date="2017" name="Biochim. Biophys. Acta">
        <title>The mitochondrial TMEM177 associates with COX20 during COX2 biogenesis.</title>
        <authorList>
            <person name="Lorenzi I."/>
            <person name="Oeljeklaus S."/>
            <person name="Aich A."/>
            <person name="Ronsoer C."/>
            <person name="Callegari S."/>
            <person name="Dudek J."/>
            <person name="Warscheid B."/>
            <person name="Dennerlein S."/>
            <person name="Rehling P."/>
        </authorList>
    </citation>
    <scope>IDENTIFICATION IN A COMPLEX WITH TMEM177; COA6; MT-CO2; COX20; COX18 AND SCO1</scope>
    <scope>INTERACTION WITH TMEM177 AND COX20</scope>
</reference>
<reference key="13">
    <citation type="journal article" date="2017" name="J. Biol. Chem.">
        <title>Human mitochondrial cytochrome c oxidase assembly factor COX18 acts transiently as a membrane insertase within the subunit 2 maturation module.</title>
        <authorList>
            <person name="Bourens M."/>
            <person name="Barrientos A."/>
        </authorList>
    </citation>
    <scope>INTERACTION WITH COX20</scope>
</reference>
<reference key="14">
    <citation type="journal article" date="2016" name="PLoS Genet.">
        <title>A comprehensive genomic analysis reveals the genetic landscape of mitochondrial respiratory chain complex deficiencies.</title>
        <authorList>
            <person name="Kohda M."/>
            <person name="Tokuzawa Y."/>
            <person name="Kishita Y."/>
            <person name="Nyuzuki H."/>
            <person name="Moriyama Y."/>
            <person name="Mizuno Y."/>
            <person name="Hirata T."/>
            <person name="Yatsuka Y."/>
            <person name="Yamashita-Sugahara Y."/>
            <person name="Nakachi Y."/>
            <person name="Kato H."/>
            <person name="Okuda A."/>
            <person name="Tamaru S."/>
            <person name="Borna N.N."/>
            <person name="Banshoya K."/>
            <person name="Aigaki T."/>
            <person name="Sato-Miyata Y."/>
            <person name="Ohnuma K."/>
            <person name="Suzuki T."/>
            <person name="Nagao A."/>
            <person name="Maehata H."/>
            <person name="Matsuda F."/>
            <person name="Higasa K."/>
            <person name="Nagasaki M."/>
            <person name="Yasuda J."/>
            <person name="Yamamoto M."/>
            <person name="Fushimi T."/>
            <person name="Shimura M."/>
            <person name="Kaiho-Ichimoto K."/>
            <person name="Harashima H."/>
            <person name="Yamazaki T."/>
            <person name="Mori M."/>
            <person name="Murayama K."/>
            <person name="Ohtake A."/>
            <person name="Okazaki Y."/>
        </authorList>
    </citation>
    <scope>VARIANTS MC4DN2 SER-193 AND THR-258</scope>
</reference>
<reference key="15">
    <citation type="journal article" date="2018" name="Elife">
        <title>COX16 promotes COX2 metallation and assembly during respiratory complex IV biogenesis.</title>
        <authorList>
            <person name="Aich A."/>
            <person name="Wang C."/>
            <person name="Chowdhury A."/>
            <person name="Ronsoer C."/>
            <person name="Pacheu-Grau D."/>
            <person name="Richter-Dennerlein R."/>
            <person name="Dennerlein S."/>
            <person name="Rehling P."/>
        </authorList>
    </citation>
    <scope>INTERACTION WITH COX16</scope>
</reference>
<reference key="16">
    <citation type="journal article" date="2007" name="Structure">
        <title>A structural characterization of human SCO2.</title>
        <authorList>
            <person name="Banci L."/>
            <person name="Bertini I."/>
            <person name="Ciofi-Baffoni S."/>
            <person name="Gerothanassis I.P."/>
            <person name="Leontari I."/>
            <person name="Martinelli M."/>
            <person name="Wang S."/>
        </authorList>
    </citation>
    <scope>STRUCTURE BY NMR OF 100-266 ALONE AND IN COMPLEX WITH COPPER</scope>
    <scope>COPPER-BINDING SITES</scope>
</reference>
<reference key="17">
    <citation type="journal article" date="2000" name="Hum. Mol. Genet.">
        <title>Mutations in SCO2 are associated with a distinct form of hypertrophic cardiomyopathy and cytochrome c oxidase deficiency.</title>
        <authorList>
            <person name="Jaksch M."/>
            <person name="Ogilvie I."/>
            <person name="Yao J."/>
            <person name="Kortenhaus G."/>
            <person name="Bresser H.G."/>
            <person name="Gerbitz K.D."/>
            <person name="Shoubridge E.A."/>
        </authorList>
    </citation>
    <scope>VARIANTS MC4DN2 LYS-140 AND TRP-171</scope>
</reference>
<reference key="18">
    <citation type="journal article" date="2001" name="Neurology">
        <title>Homozygosity (E140K) in SCO2 causes delayed infantile onset of cardiomyopathy and neuropathy.</title>
        <authorList>
            <person name="Jaksch M."/>
            <person name="Horvath R."/>
            <person name="Horn N."/>
            <person name="Auer D.P."/>
            <person name="Macmillan C."/>
            <person name="Peters J."/>
            <person name="Gerbitz K.D."/>
            <person name="Kraegeloh-Mann I."/>
            <person name="Muntau A."/>
            <person name="Karcagi V."/>
            <person name="Kalmanchey R."/>
            <person name="Lochmuller H."/>
            <person name="Shoubridge E.A."/>
            <person name="Freisinger P."/>
        </authorList>
    </citation>
    <scope>VARIANT MC4DN2 LYS-140</scope>
</reference>
<reference key="19">
    <citation type="journal article" date="2004" name="Am. J. Med. Genet. A">
        <title>Novel SCO2 mutation (G1521A) presenting as a spinal muscular atrophy type I phenotype.</title>
        <authorList>
            <person name="Tarnopolsky M.A."/>
            <person name="Bourgeois J.M."/>
            <person name="Fu M.H."/>
            <person name="Kataeva G."/>
            <person name="Shah J."/>
            <person name="Simon D.K."/>
            <person name="Mahoney D."/>
            <person name="Johns D."/>
            <person name="MacKay N."/>
            <person name="Robinson B.H."/>
        </authorList>
    </citation>
    <scope>VARIANTS MC4DN2 TYR-133 AND LYS-140</scope>
</reference>
<reference key="20">
    <citation type="journal article" date="2009" name="Clin. Neuropathol.">
        <title>A novel homozygous SCO2 mutation, p.G193S, causing fatal infantile cardioencephalomyopathy.</title>
        <authorList>
            <person name="Mobley B.C."/>
            <person name="Enns G.M."/>
            <person name="Wong L.J."/>
            <person name="Vogel H."/>
        </authorList>
    </citation>
    <scope>VARIANT PRO-20</scope>
    <scope>VARIANT MC4DN2 SER-193</scope>
</reference>
<reference key="21">
    <citation type="journal article" date="2013" name="Am. J. Hum. Genet.">
        <title>Mutations in SCO2 are associated with autosomal-dominant high-grade myopia.</title>
        <authorList>
            <person name="Tran-Viet K.N."/>
            <person name="Powell C."/>
            <person name="Barathi V.A."/>
            <person name="Klemm T."/>
            <person name="Maurer-Stroh S."/>
            <person name="Limviphuvadh V."/>
            <person name="Soler V."/>
            <person name="Ho C."/>
            <person name="Yanovitch T."/>
            <person name="Schneider G."/>
            <person name="Li Y.J."/>
            <person name="Nading E."/>
            <person name="Metlapally R."/>
            <person name="Saw S.M."/>
            <person name="Goh L."/>
            <person name="Rozen S."/>
            <person name="Young T.L."/>
        </authorList>
    </citation>
    <scope>VARIANTS MYP6 HIS-114; LYS-140 AND VAL-259</scope>
</reference>
<reference key="22">
    <citation type="journal article" date="2015" name="Invest. Ophthalmol. Vis. Sci.">
        <title>Detection of mutations in LRPAP1, CTSH, LEPREL1, ZNF644, SLC39A5, and SCO2 in 298 families with early-onset high myopia by exome sequencing.</title>
        <authorList>
            <person name="Jiang D."/>
            <person name="Li J."/>
            <person name="Xiao X."/>
            <person name="Li S."/>
            <person name="Jia X."/>
            <person name="Sun W."/>
            <person name="Guo X."/>
            <person name="Zhang Q."/>
        </authorList>
    </citation>
    <scope>VARIANTS MYP6 TRP-112 AND TRP-120</scope>
</reference>
<feature type="transit peptide" description="Mitochondrion" evidence="1">
    <location>
        <begin position="1"/>
        <end position="41"/>
    </location>
</feature>
<feature type="chain" id="PRO_0000031922" description="Protein SCO2 homolog, mitochondrial">
    <location>
        <begin position="42"/>
        <end position="266"/>
    </location>
</feature>
<feature type="topological domain" description="Mitochondrial matrix" evidence="22">
    <location>
        <begin position="42"/>
        <end position="60"/>
    </location>
</feature>
<feature type="transmembrane region" description="Helical" evidence="1">
    <location>
        <begin position="61"/>
        <end position="78"/>
    </location>
</feature>
<feature type="topological domain" description="Mitochondrial intermembrane" evidence="22">
    <location>
        <begin position="79"/>
        <end position="266"/>
    </location>
</feature>
<feature type="domain" description="Thioredoxin" evidence="2">
    <location>
        <begin position="85"/>
        <end position="259"/>
    </location>
</feature>
<feature type="binding site" evidence="10 23">
    <location>
        <position position="133"/>
    </location>
    <ligand>
        <name>Cu cation</name>
        <dbReference type="ChEBI" id="CHEBI:23378"/>
    </ligand>
</feature>
<feature type="binding site" evidence="10 23">
    <location>
        <position position="137"/>
    </location>
    <ligand>
        <name>Cu cation</name>
        <dbReference type="ChEBI" id="CHEBI:23378"/>
    </ligand>
</feature>
<feature type="binding site" evidence="10 23">
    <location>
        <position position="224"/>
    </location>
    <ligand>
        <name>Cu cation</name>
        <dbReference type="ChEBI" id="CHEBI:23378"/>
    </ligand>
</feature>
<feature type="disulfide bond" description="Redox-active" evidence="2">
    <location>
        <begin position="133"/>
        <end position="137"/>
    </location>
</feature>
<feature type="sequence variant" id="VAR_011738" description="In dbSNP:rs140523." evidence="8 12">
    <original>R</original>
    <variation>P</variation>
    <location>
        <position position="20"/>
    </location>
</feature>
<feature type="sequence variant" id="VAR_074010" description="In MYP6; uncertain significance; dbSNP:rs370130010." evidence="15">
    <original>R</original>
    <variation>W</variation>
    <location>
        <position position="112"/>
    </location>
</feature>
<feature type="sequence variant" id="VAR_070053" description="In MYP6; remains stable in mitochondria; reduces the level of the protein copurifying with COA6 by 80%; dbSNP:rs145100473." evidence="13 16">
    <original>R</original>
    <variation>H</variation>
    <location>
        <position position="114"/>
    </location>
</feature>
<feature type="sequence variant" id="VAR_074011" description="In MYP6; uncertain significance; dbSNP:rs375954523." evidence="15">
    <original>R</original>
    <variation>W</variation>
    <location>
        <position position="120"/>
    </location>
</feature>
<feature type="sequence variant" id="VAR_070054" description="In MC4DN2; dbSNP:rs28937868." evidence="6">
    <original>C</original>
    <variation>Y</variation>
    <location>
        <position position="133"/>
    </location>
</feature>
<feature type="sequence variant" id="VAR_008874" description="In MC4DN2 and MYP6; reduced cytochrome c oxidase subunit II synthesis and reduced ability to regulate cellular copper homeostasis; dbSNP:rs74315511." evidence="3 4 5 6 9 11 13">
    <original>E</original>
    <variation>K</variation>
    <location>
        <position position="140"/>
    </location>
</feature>
<feature type="sequence variant" id="VAR_013238" description="In MC4DN2; renders the protein unstable; dbSNP:rs28937598." evidence="4 16">
    <original>R</original>
    <variation>W</variation>
    <location>
        <position position="171"/>
    </location>
</feature>
<feature type="sequence variant" id="VAR_076281" description="In MC4DN2; dbSNP:rs759452074." evidence="12 17">
    <original>G</original>
    <variation>S</variation>
    <location>
        <position position="193"/>
    </location>
</feature>
<feature type="sequence variant" id="VAR_008875" description="In MC4DN2; dbSNP:rs80358232." evidence="3">
    <original>S</original>
    <variation>F</variation>
    <location>
        <position position="225"/>
    </location>
</feature>
<feature type="sequence variant" id="VAR_076282" description="In MC4DN2; dbSNP:rs1352878283." evidence="17">
    <original>M</original>
    <variation>T</variation>
    <location>
        <position position="258"/>
    </location>
</feature>
<feature type="sequence variant" id="VAR_051912" description="In MYP6; likely benign; dbSNP:rs8139305." evidence="13">
    <original>A</original>
    <variation>V</variation>
    <location>
        <position position="259"/>
    </location>
</feature>
<feature type="strand" evidence="24">
    <location>
        <begin position="105"/>
        <end position="108"/>
    </location>
</feature>
<feature type="strand" evidence="24">
    <location>
        <begin position="113"/>
        <end position="115"/>
    </location>
</feature>
<feature type="turn" evidence="24">
    <location>
        <begin position="116"/>
        <end position="121"/>
    </location>
</feature>
<feature type="strand" evidence="24">
    <location>
        <begin position="122"/>
        <end position="129"/>
    </location>
</feature>
<feature type="strand" evidence="24">
    <location>
        <begin position="134"/>
        <end position="136"/>
    </location>
</feature>
<feature type="helix" evidence="24">
    <location>
        <begin position="137"/>
        <end position="153"/>
    </location>
</feature>
<feature type="strand" evidence="24">
    <location>
        <begin position="160"/>
        <end position="167"/>
    </location>
</feature>
<feature type="helix" evidence="24">
    <location>
        <begin position="174"/>
        <end position="182"/>
    </location>
</feature>
<feature type="strand" evidence="24">
    <location>
        <begin position="190"/>
        <end position="192"/>
    </location>
</feature>
<feature type="helix" evidence="24">
    <location>
        <begin position="195"/>
        <end position="204"/>
    </location>
</feature>
<feature type="strand" evidence="24">
    <location>
        <begin position="227"/>
        <end position="231"/>
    </location>
</feature>
<feature type="strand" evidence="24">
    <location>
        <begin position="237"/>
        <end position="244"/>
    </location>
</feature>
<feature type="helix" evidence="24">
    <location>
        <begin position="247"/>
        <end position="261"/>
    </location>
</feature>
<sequence length="266" mass="29810">MLLLTRSPTAWHRLSQLKPRVLPGTLGGQALHLRSWLLSRQGPAETGGQGQPQGPGLRTRLLITGLFGAGLGGAWLALRAEKERLQQQKRTEALRQAAVGQGDFHLLDHRGRARCKADFRGQWVLMYFGFTHCPDICPDELEKLVQVVRQLEAEPGLPPVQPVFITVDPERDDVEAMARYVQDFHPRLLGLTGSTKQVAQASHSYRVYYNAGPKDEDQDYIVDHSIAIYLLNPDGLFTDYYGRSRSAEQISDSVRRHMAAFRSVLS</sequence>
<proteinExistence type="evidence at protein level"/>
<evidence type="ECO:0000255" key="1"/>
<evidence type="ECO:0000255" key="2">
    <source>
        <dbReference type="PROSITE-ProRule" id="PRU00691"/>
    </source>
</evidence>
<evidence type="ECO:0000269" key="3">
    <source>
    </source>
</evidence>
<evidence type="ECO:0000269" key="4">
    <source>
    </source>
</evidence>
<evidence type="ECO:0000269" key="5">
    <source>
    </source>
</evidence>
<evidence type="ECO:0000269" key="6">
    <source>
    </source>
</evidence>
<evidence type="ECO:0000269" key="7">
    <source>
    </source>
</evidence>
<evidence type="ECO:0000269" key="8">
    <source>
    </source>
</evidence>
<evidence type="ECO:0000269" key="9">
    <source>
    </source>
</evidence>
<evidence type="ECO:0000269" key="10">
    <source>
    </source>
</evidence>
<evidence type="ECO:0000269" key="11">
    <source>
    </source>
</evidence>
<evidence type="ECO:0000269" key="12">
    <source>
    </source>
</evidence>
<evidence type="ECO:0000269" key="13">
    <source>
    </source>
</evidence>
<evidence type="ECO:0000269" key="14">
    <source>
    </source>
</evidence>
<evidence type="ECO:0000269" key="15">
    <source>
    </source>
</evidence>
<evidence type="ECO:0000269" key="16">
    <source>
    </source>
</evidence>
<evidence type="ECO:0000269" key="17">
    <source>
    </source>
</evidence>
<evidence type="ECO:0000269" key="18">
    <source>
    </source>
</evidence>
<evidence type="ECO:0000269" key="19">
    <source>
    </source>
</evidence>
<evidence type="ECO:0000269" key="20">
    <source>
    </source>
</evidence>
<evidence type="ECO:0000305" key="21"/>
<evidence type="ECO:0000305" key="22">
    <source>
    </source>
</evidence>
<evidence type="ECO:0007744" key="23">
    <source>
        <dbReference type="PDB" id="2RLI"/>
    </source>
</evidence>
<evidence type="ECO:0007829" key="24">
    <source>
        <dbReference type="PDB" id="2RLI"/>
    </source>
</evidence>
<accession>O43819</accession>
<accession>Q3T1B5</accession>
<accession>Q9UK87</accession>
<comment type="function">
    <text evidence="7 9 11">Copper metallochaperone essential for the synthesis and maturation of cytochrome c oxidase subunit II (MT-CO2/COX2) by facilitating the incorporation of copper into the Cu(A) site of MT-CO2/COX2 (PubMed:15229189, PubMed:17189203, PubMed:19336478). Could also act as a thiol-disulfide oxidoreductase to regulate the redox state of the cysteines in SCO1 during maturation of MT-CO2/COX2 (PubMed:19336478).</text>
</comment>
<comment type="subunit">
    <text evidence="7 14 16 18 19 20">Homodimer (PubMed:15229189). Interacts with COA6 (PubMed:25959673). Found in a complex with TMEM177, COX20, COA6, MT-CO2/COX2, COX18 and SCO1 (PubMed:29154948). Interacts with TMEM177 in a COX20-dependent manner (PubMed:29154948). Interacts with COX20 in a MT-CO2/COX2- and COX18-dependent manner (PubMed:24403053, PubMed:28330871, PubMed:29154948). Interacts with COX16 (PubMed:29381136).</text>
</comment>
<comment type="interaction">
    <interactant intactId="EBI-357012">
        <id>O43819</id>
    </interactant>
    <interactant intactId="EBI-7062247">
        <id>Q9UHD4</id>
        <label>CIDEB</label>
    </interactant>
    <organismsDiffer>false</organismsDiffer>
    <experiments>3</experiments>
</comment>
<comment type="subcellular location">
    <subcellularLocation>
        <location evidence="7">Mitochondrion inner membrane</location>
        <topology evidence="1">Single-pass membrane protein</topology>
    </subcellularLocation>
</comment>
<comment type="tissue specificity">
    <text>Ubiquitous.</text>
</comment>
<comment type="disease" evidence="3 4 5 6 9 11 12 16 17">
    <disease id="DI-01608">
        <name>Mitochondrial complex IV deficiency, nuclear type 2</name>
        <acronym>MC4DN2</acronym>
        <description>An autosomal recessive, severe mitochondrial disorder characterized by hypotonia, global developmental delay, hypertrophic cardiomyopathy, lactic acidosis, gliosis, and neuronal loss in basal ganglia, brainstem and spinal cord. Serum lactate is increased, and laboratory studies show decreased mitochondrial complex IV protein and activity levels in various tissues, including heart and skeletal muscle. Most patients die in infancy of cardiorespiratory failure.</description>
        <dbReference type="MIM" id="604377"/>
    </disease>
    <text>The disease is caused by variants affecting the gene represented in this entry.</text>
</comment>
<comment type="disease" evidence="13 15 16">
    <disease id="DI-03792">
        <name>Myopia 6</name>
        <acronym>MYP6</acronym>
        <description>A refractive error of the eye, in which parallel rays from a distant object come to focus in front of the retina, vision being better for near objects than for far.</description>
        <dbReference type="MIM" id="608908"/>
    </disease>
    <text>The disease is caused by variants affecting the gene represented in this entry.</text>
</comment>
<comment type="similarity">
    <text evidence="21">Belongs to the SCO1/2 family.</text>
</comment>
<dbReference type="EMBL" id="AF177385">
    <property type="protein sequence ID" value="AAF05313.1"/>
    <property type="molecule type" value="Genomic_DNA"/>
</dbReference>
<dbReference type="EMBL" id="AL021683">
    <property type="protein sequence ID" value="CAA16671.1"/>
    <property type="molecule type" value="mRNA"/>
</dbReference>
<dbReference type="EMBL" id="CR456569">
    <property type="protein sequence ID" value="CAG30455.1"/>
    <property type="molecule type" value="mRNA"/>
</dbReference>
<dbReference type="EMBL" id="BC102024">
    <property type="protein sequence ID" value="AAI02025.1"/>
    <property type="molecule type" value="mRNA"/>
</dbReference>
<dbReference type="EMBL" id="BC102025">
    <property type="protein sequence ID" value="AAI02026.1"/>
    <property type="molecule type" value="mRNA"/>
</dbReference>
<dbReference type="CCDS" id="CCDS14095.1"/>
<dbReference type="RefSeq" id="NP_001162580.1">
    <property type="nucleotide sequence ID" value="NM_001169109.2"/>
</dbReference>
<dbReference type="RefSeq" id="NP_001162581.1">
    <property type="nucleotide sequence ID" value="NM_001169110.1"/>
</dbReference>
<dbReference type="RefSeq" id="NP_001162582.1">
    <property type="nucleotide sequence ID" value="NM_001169111.2"/>
</dbReference>
<dbReference type="RefSeq" id="NP_005129.2">
    <property type="nucleotide sequence ID" value="NM_005138.3"/>
</dbReference>
<dbReference type="PDB" id="2RLI">
    <property type="method" value="NMR"/>
    <property type="chains" value="A=100-266"/>
</dbReference>
<dbReference type="PDBsum" id="2RLI"/>
<dbReference type="BMRB" id="O43819"/>
<dbReference type="SMR" id="O43819"/>
<dbReference type="BioGRID" id="115317">
    <property type="interactions" value="138"/>
</dbReference>
<dbReference type="DIP" id="DIP-46088N"/>
<dbReference type="FunCoup" id="O43819">
    <property type="interactions" value="1048"/>
</dbReference>
<dbReference type="IntAct" id="O43819">
    <property type="interactions" value="64"/>
</dbReference>
<dbReference type="MINT" id="O43819"/>
<dbReference type="STRING" id="9606.ENSP00000444433"/>
<dbReference type="GlyGen" id="O43819">
    <property type="glycosylation" value="1 site, 1 O-linked glycan (1 site)"/>
</dbReference>
<dbReference type="iPTMnet" id="O43819"/>
<dbReference type="PhosphoSitePlus" id="O43819"/>
<dbReference type="SwissPalm" id="O43819"/>
<dbReference type="BioMuta" id="SCO2"/>
<dbReference type="jPOST" id="O43819"/>
<dbReference type="MassIVE" id="O43819"/>
<dbReference type="PaxDb" id="9606-ENSP00000444433"/>
<dbReference type="PeptideAtlas" id="O43819"/>
<dbReference type="ProteomicsDB" id="49182"/>
<dbReference type="Pumba" id="O43819"/>
<dbReference type="Antibodypedia" id="78977">
    <property type="antibodies" value="167 antibodies from 31 providers"/>
</dbReference>
<dbReference type="DNASU" id="9997"/>
<dbReference type="Ensembl" id="ENST00000252785.3">
    <property type="protein sequence ID" value="ENSP00000252785.3"/>
    <property type="gene ID" value="ENSG00000284194.3"/>
</dbReference>
<dbReference type="Ensembl" id="ENST00000395693.8">
    <property type="protein sequence ID" value="ENSP00000379046.4"/>
    <property type="gene ID" value="ENSG00000284194.3"/>
</dbReference>
<dbReference type="Ensembl" id="ENST00000535425.5">
    <property type="protein sequence ID" value="ENSP00000444242.1"/>
    <property type="gene ID" value="ENSG00000284194.3"/>
</dbReference>
<dbReference type="Ensembl" id="ENST00000543927.6">
    <property type="protein sequence ID" value="ENSP00000444433.1"/>
    <property type="gene ID" value="ENSG00000284194.3"/>
</dbReference>
<dbReference type="GeneID" id="9997"/>
<dbReference type="KEGG" id="hsa:9997"/>
<dbReference type="MANE-Select" id="ENST00000395693.8">
    <property type="protein sequence ID" value="ENSP00000379046.4"/>
    <property type="RefSeq nucleotide sequence ID" value="NM_005138.3"/>
    <property type="RefSeq protein sequence ID" value="NP_005129.2"/>
</dbReference>
<dbReference type="UCSC" id="uc003blz.5">
    <property type="organism name" value="human"/>
</dbReference>
<dbReference type="AGR" id="HGNC:10604"/>
<dbReference type="CTD" id="9997"/>
<dbReference type="DisGeNET" id="9997"/>
<dbReference type="GeneCards" id="SCO2"/>
<dbReference type="GeneReviews" id="SCO2"/>
<dbReference type="HGNC" id="HGNC:10604">
    <property type="gene designation" value="SCO2"/>
</dbReference>
<dbReference type="HPA" id="ENSG00000284194">
    <property type="expression patterns" value="Low tissue specificity"/>
</dbReference>
<dbReference type="MalaCards" id="SCO2"/>
<dbReference type="MIM" id="604272">
    <property type="type" value="gene"/>
</dbReference>
<dbReference type="MIM" id="604377">
    <property type="type" value="phenotype"/>
</dbReference>
<dbReference type="MIM" id="608908">
    <property type="type" value="phenotype"/>
</dbReference>
<dbReference type="neXtProt" id="NX_O43819"/>
<dbReference type="Orphanet" id="521411">
    <property type="disease" value="Autosomal recessive axonal Charcot-Marie-Tooth disease due to copper metabolism defect"/>
</dbReference>
<dbReference type="Orphanet" id="1561">
    <property type="disease" value="Fatal infantile cytochrome C oxidase deficiency"/>
</dbReference>
<dbReference type="Orphanet" id="98619">
    <property type="disease" value="Rare isolated myopia"/>
</dbReference>
<dbReference type="PharmGKB" id="PA35013"/>
<dbReference type="VEuPathDB" id="HostDB:ENSG00000284194"/>
<dbReference type="eggNOG" id="KOG2792">
    <property type="taxonomic scope" value="Eukaryota"/>
</dbReference>
<dbReference type="GeneTree" id="ENSGT00390000004323"/>
<dbReference type="HOGENOM" id="CLU_050131_0_3_1"/>
<dbReference type="InParanoid" id="O43819"/>
<dbReference type="OMA" id="YYNRMKS"/>
<dbReference type="OrthoDB" id="76676at2759"/>
<dbReference type="PAN-GO" id="O43819">
    <property type="GO annotations" value="1 GO annotation based on evolutionary models"/>
</dbReference>
<dbReference type="PhylomeDB" id="O43819"/>
<dbReference type="TreeFam" id="TF313752"/>
<dbReference type="PathwayCommons" id="O43819"/>
<dbReference type="Reactome" id="R-HSA-5628897">
    <property type="pathway name" value="TP53 Regulates Metabolic Genes"/>
</dbReference>
<dbReference type="Reactome" id="R-HSA-9864848">
    <property type="pathway name" value="Complex IV assembly"/>
</dbReference>
<dbReference type="SignaLink" id="O43819"/>
<dbReference type="SIGNOR" id="O43819"/>
<dbReference type="BioGRID-ORCS" id="9997">
    <property type="hits" value="196 hits in 1174 CRISPR screens"/>
</dbReference>
<dbReference type="ChiTaRS" id="SCO2">
    <property type="organism name" value="human"/>
</dbReference>
<dbReference type="EvolutionaryTrace" id="O43819"/>
<dbReference type="GeneWiki" id="SCO2"/>
<dbReference type="GenomeRNAi" id="9997"/>
<dbReference type="Pharos" id="O43819">
    <property type="development level" value="Tbio"/>
</dbReference>
<dbReference type="PRO" id="PR:O43819"/>
<dbReference type="Proteomes" id="UP000005640">
    <property type="component" value="Chromosome 22"/>
</dbReference>
<dbReference type="RNAct" id="O43819">
    <property type="molecule type" value="protein"/>
</dbReference>
<dbReference type="Bgee" id="ENSG00000284194">
    <property type="expression patterns" value="Expressed in right uterine tube and 176 other cell types or tissues"/>
</dbReference>
<dbReference type="ExpressionAtlas" id="O43819">
    <property type="expression patterns" value="baseline and differential"/>
</dbReference>
<dbReference type="GO" id="GO:0005743">
    <property type="term" value="C:mitochondrial inner membrane"/>
    <property type="evidence" value="ECO:0000314"/>
    <property type="project" value="UniProtKB"/>
</dbReference>
<dbReference type="GO" id="GO:0005739">
    <property type="term" value="C:mitochondrion"/>
    <property type="evidence" value="ECO:0000314"/>
    <property type="project" value="HPA"/>
</dbReference>
<dbReference type="GO" id="GO:0030016">
    <property type="term" value="C:myofibril"/>
    <property type="evidence" value="ECO:0000314"/>
    <property type="project" value="MGI"/>
</dbReference>
<dbReference type="GO" id="GO:0016531">
    <property type="term" value="F:copper chaperone activity"/>
    <property type="evidence" value="ECO:0007669"/>
    <property type="project" value="InterPro"/>
</dbReference>
<dbReference type="GO" id="GO:0005507">
    <property type="term" value="F:copper ion binding"/>
    <property type="evidence" value="ECO:0000303"/>
    <property type="project" value="UniProtKB"/>
</dbReference>
<dbReference type="GO" id="GO:0015035">
    <property type="term" value="F:protein-disulfide reductase activity"/>
    <property type="evidence" value="ECO:0000314"/>
    <property type="project" value="UniProtKB"/>
</dbReference>
<dbReference type="GO" id="GO:0001654">
    <property type="term" value="P:eye development"/>
    <property type="evidence" value="ECO:0000315"/>
    <property type="project" value="UniProtKB"/>
</dbReference>
<dbReference type="GO" id="GO:0001701">
    <property type="term" value="P:in utero embryonic development"/>
    <property type="evidence" value="ECO:0007669"/>
    <property type="project" value="Ensembl"/>
</dbReference>
<dbReference type="GO" id="GO:0006878">
    <property type="term" value="P:intracellular copper ion homeostasis"/>
    <property type="evidence" value="ECO:0007669"/>
    <property type="project" value="InterPro"/>
</dbReference>
<dbReference type="GO" id="GO:0033617">
    <property type="term" value="P:mitochondrial cytochrome c oxidase assembly"/>
    <property type="evidence" value="ECO:0000315"/>
    <property type="project" value="UniProtKB"/>
</dbReference>
<dbReference type="GO" id="GO:0003012">
    <property type="term" value="P:muscle system process"/>
    <property type="evidence" value="ECO:0007669"/>
    <property type="project" value="Ensembl"/>
</dbReference>
<dbReference type="GO" id="GO:0022904">
    <property type="term" value="P:respiratory electron transport chain"/>
    <property type="evidence" value="ECO:0007669"/>
    <property type="project" value="Ensembl"/>
</dbReference>
<dbReference type="GO" id="GO:0014823">
    <property type="term" value="P:response to activity"/>
    <property type="evidence" value="ECO:0007669"/>
    <property type="project" value="Ensembl"/>
</dbReference>
<dbReference type="CDD" id="cd02968">
    <property type="entry name" value="SCO"/>
    <property type="match status" value="1"/>
</dbReference>
<dbReference type="FunFam" id="3.40.30.10:FF:000013">
    <property type="entry name" value="Blast:Protein SCO1 homolog, mitochondrial"/>
    <property type="match status" value="1"/>
</dbReference>
<dbReference type="Gene3D" id="3.40.30.10">
    <property type="entry name" value="Glutaredoxin"/>
    <property type="match status" value="1"/>
</dbReference>
<dbReference type="InterPro" id="IPR003782">
    <property type="entry name" value="SCO1/SenC"/>
</dbReference>
<dbReference type="InterPro" id="IPR017276">
    <property type="entry name" value="Synth_of_cyt-c-oxidase_Sco1/2"/>
</dbReference>
<dbReference type="InterPro" id="IPR036249">
    <property type="entry name" value="Thioredoxin-like_sf"/>
</dbReference>
<dbReference type="InterPro" id="IPR013766">
    <property type="entry name" value="Thioredoxin_domain"/>
</dbReference>
<dbReference type="PANTHER" id="PTHR12151">
    <property type="entry name" value="ELECTRON TRANSPORT PROTIN SCO1/SENC FAMILY MEMBER"/>
    <property type="match status" value="1"/>
</dbReference>
<dbReference type="PANTHER" id="PTHR12151:SF2">
    <property type="entry name" value="PROTEIN SCO2 HOMOLOG, MITOCHONDRIAL"/>
    <property type="match status" value="1"/>
</dbReference>
<dbReference type="Pfam" id="PF02630">
    <property type="entry name" value="SCO1-SenC"/>
    <property type="match status" value="1"/>
</dbReference>
<dbReference type="PIRSF" id="PIRSF037736">
    <property type="entry name" value="SCO1"/>
    <property type="match status" value="1"/>
</dbReference>
<dbReference type="SUPFAM" id="SSF52833">
    <property type="entry name" value="Thioredoxin-like"/>
    <property type="match status" value="1"/>
</dbReference>
<dbReference type="PROSITE" id="PS51352">
    <property type="entry name" value="THIOREDOXIN_2"/>
    <property type="match status" value="1"/>
</dbReference>
<name>SCO2_HUMAN</name>
<protein>
    <recommendedName>
        <fullName>Protein SCO2 homolog, mitochondrial</fullName>
    </recommendedName>
</protein>
<organism>
    <name type="scientific">Homo sapiens</name>
    <name type="common">Human</name>
    <dbReference type="NCBI Taxonomy" id="9606"/>
    <lineage>
        <taxon>Eukaryota</taxon>
        <taxon>Metazoa</taxon>
        <taxon>Chordata</taxon>
        <taxon>Craniata</taxon>
        <taxon>Vertebrata</taxon>
        <taxon>Euteleostomi</taxon>
        <taxon>Mammalia</taxon>
        <taxon>Eutheria</taxon>
        <taxon>Euarchontoglires</taxon>
        <taxon>Primates</taxon>
        <taxon>Haplorrhini</taxon>
        <taxon>Catarrhini</taxon>
        <taxon>Hominidae</taxon>
        <taxon>Homo</taxon>
    </lineage>
</organism>
<gene>
    <name type="primary">SCO2</name>
</gene>